<protein>
    <recommendedName>
        <fullName evidence="1">Small ribosomal subunit protein uS7</fullName>
    </recommendedName>
    <alternativeName>
        <fullName evidence="2">30S ribosomal protein S7</fullName>
    </alternativeName>
</protein>
<comment type="function">
    <text evidence="1">One of the primary rRNA binding proteins, it binds directly to 16S rRNA where it nucleates assembly of the head domain of the 30S subunit. Is located at the subunit interface close to the decoding center, probably blocks exit of the E-site tRNA.</text>
</comment>
<comment type="subunit">
    <text evidence="1">Part of the 30S ribosomal subunit. Contacts proteins S9 and S11.</text>
</comment>
<comment type="similarity">
    <text evidence="1">Belongs to the universal ribosomal protein uS7 family.</text>
</comment>
<keyword id="KW-0687">Ribonucleoprotein</keyword>
<keyword id="KW-0689">Ribosomal protein</keyword>
<keyword id="KW-0694">RNA-binding</keyword>
<keyword id="KW-0699">rRNA-binding</keyword>
<keyword id="KW-0820">tRNA-binding</keyword>
<proteinExistence type="inferred from homology"/>
<feature type="chain" id="PRO_0000124374" description="Small ribosomal subunit protein uS7">
    <location>
        <begin position="1"/>
        <end position="156"/>
    </location>
</feature>
<dbReference type="EMBL" id="BX251412">
    <property type="protein sequence ID" value="CAD67354.1"/>
    <property type="molecule type" value="Genomic_DNA"/>
</dbReference>
<dbReference type="RefSeq" id="WP_011096632.1">
    <property type="nucleotide sequence ID" value="NC_004551.1"/>
</dbReference>
<dbReference type="SMR" id="Q83HC8"/>
<dbReference type="GeneID" id="67388471"/>
<dbReference type="KEGG" id="tws:TW695"/>
<dbReference type="HOGENOM" id="CLU_072226_1_1_11"/>
<dbReference type="GO" id="GO:0015935">
    <property type="term" value="C:small ribosomal subunit"/>
    <property type="evidence" value="ECO:0007669"/>
    <property type="project" value="InterPro"/>
</dbReference>
<dbReference type="GO" id="GO:0019843">
    <property type="term" value="F:rRNA binding"/>
    <property type="evidence" value="ECO:0007669"/>
    <property type="project" value="UniProtKB-UniRule"/>
</dbReference>
<dbReference type="GO" id="GO:0003735">
    <property type="term" value="F:structural constituent of ribosome"/>
    <property type="evidence" value="ECO:0007669"/>
    <property type="project" value="InterPro"/>
</dbReference>
<dbReference type="GO" id="GO:0000049">
    <property type="term" value="F:tRNA binding"/>
    <property type="evidence" value="ECO:0007669"/>
    <property type="project" value="UniProtKB-UniRule"/>
</dbReference>
<dbReference type="GO" id="GO:0006412">
    <property type="term" value="P:translation"/>
    <property type="evidence" value="ECO:0007669"/>
    <property type="project" value="UniProtKB-UniRule"/>
</dbReference>
<dbReference type="CDD" id="cd14869">
    <property type="entry name" value="uS7_Bacteria"/>
    <property type="match status" value="1"/>
</dbReference>
<dbReference type="FunFam" id="1.10.455.10:FF:000001">
    <property type="entry name" value="30S ribosomal protein S7"/>
    <property type="match status" value="1"/>
</dbReference>
<dbReference type="Gene3D" id="1.10.455.10">
    <property type="entry name" value="Ribosomal protein S7 domain"/>
    <property type="match status" value="1"/>
</dbReference>
<dbReference type="HAMAP" id="MF_00480_B">
    <property type="entry name" value="Ribosomal_uS7_B"/>
    <property type="match status" value="1"/>
</dbReference>
<dbReference type="InterPro" id="IPR000235">
    <property type="entry name" value="Ribosomal_uS7"/>
</dbReference>
<dbReference type="InterPro" id="IPR005717">
    <property type="entry name" value="Ribosomal_uS7_bac/org-type"/>
</dbReference>
<dbReference type="InterPro" id="IPR020606">
    <property type="entry name" value="Ribosomal_uS7_CS"/>
</dbReference>
<dbReference type="InterPro" id="IPR023798">
    <property type="entry name" value="Ribosomal_uS7_dom"/>
</dbReference>
<dbReference type="InterPro" id="IPR036823">
    <property type="entry name" value="Ribosomal_uS7_dom_sf"/>
</dbReference>
<dbReference type="NCBIfam" id="TIGR01029">
    <property type="entry name" value="rpsG_bact"/>
    <property type="match status" value="1"/>
</dbReference>
<dbReference type="PANTHER" id="PTHR11205">
    <property type="entry name" value="RIBOSOMAL PROTEIN S7"/>
    <property type="match status" value="1"/>
</dbReference>
<dbReference type="Pfam" id="PF00177">
    <property type="entry name" value="Ribosomal_S7"/>
    <property type="match status" value="1"/>
</dbReference>
<dbReference type="PIRSF" id="PIRSF002122">
    <property type="entry name" value="RPS7p_RPS7a_RPS5e_RPS7o"/>
    <property type="match status" value="1"/>
</dbReference>
<dbReference type="SUPFAM" id="SSF47973">
    <property type="entry name" value="Ribosomal protein S7"/>
    <property type="match status" value="1"/>
</dbReference>
<dbReference type="PROSITE" id="PS00052">
    <property type="entry name" value="RIBOSOMAL_S7"/>
    <property type="match status" value="1"/>
</dbReference>
<sequence>MPRKGPVVRREIPEDPVYSSRVVSQLIGRVLLSGKKSLAQRIVYSALDKVSMKASEDPVSVLRKALDNVRPSLEVRSRRVGGSTYQVPVPVRSHRADALAIRWLTVYSRARREKSMVDRLASEILDASNGVGATVKCKEDTHRMAESNRAFAHYRW</sequence>
<reference key="1">
    <citation type="journal article" date="2003" name="Lancet">
        <title>Sequencing and analysis of the genome of the Whipple's disease bacterium Tropheryma whipplei.</title>
        <authorList>
            <person name="Bentley S.D."/>
            <person name="Maiwald M."/>
            <person name="Murphy L.D."/>
            <person name="Pallen M.J."/>
            <person name="Yeats C.A."/>
            <person name="Dover L.G."/>
            <person name="Norbertczak H.T."/>
            <person name="Besra G.S."/>
            <person name="Quail M.A."/>
            <person name="Harris D.E."/>
            <person name="von Herbay A."/>
            <person name="Goble A."/>
            <person name="Rutter S."/>
            <person name="Squares R."/>
            <person name="Squares S."/>
            <person name="Barrell B.G."/>
            <person name="Parkhill J."/>
            <person name="Relman D.A."/>
        </authorList>
    </citation>
    <scope>NUCLEOTIDE SEQUENCE [LARGE SCALE GENOMIC DNA]</scope>
    <source>
        <strain>TW08/27</strain>
    </source>
</reference>
<gene>
    <name evidence="1" type="primary">rpsG</name>
    <name type="ordered locus">TW695</name>
</gene>
<accession>Q83HC8</accession>
<organism>
    <name type="scientific">Tropheryma whipplei (strain TW08/27)</name>
    <name type="common">Whipple's bacillus</name>
    <dbReference type="NCBI Taxonomy" id="218496"/>
    <lineage>
        <taxon>Bacteria</taxon>
        <taxon>Bacillati</taxon>
        <taxon>Actinomycetota</taxon>
        <taxon>Actinomycetes</taxon>
        <taxon>Micrococcales</taxon>
        <taxon>Tropherymataceae</taxon>
        <taxon>Tropheryma</taxon>
    </lineage>
</organism>
<name>RS7_TROW8</name>
<evidence type="ECO:0000255" key="1">
    <source>
        <dbReference type="HAMAP-Rule" id="MF_00480"/>
    </source>
</evidence>
<evidence type="ECO:0000305" key="2"/>